<dbReference type="EC" id="3.6.4.12"/>
<dbReference type="EMBL" id="CH408032">
    <property type="protein sequence ID" value="EAQ88094.1"/>
    <property type="molecule type" value="Genomic_DNA"/>
</dbReference>
<dbReference type="RefSeq" id="XP_001223927.1">
    <property type="nucleotide sequence ID" value="XM_001223926.1"/>
</dbReference>
<dbReference type="SMR" id="Q2H0I3"/>
<dbReference type="FunCoup" id="Q2H0I3">
    <property type="interactions" value="601"/>
</dbReference>
<dbReference type="STRING" id="306901.Q2H0I3"/>
<dbReference type="GeneID" id="4392952"/>
<dbReference type="VEuPathDB" id="FungiDB:CHGG_04713"/>
<dbReference type="eggNOG" id="KOG2327">
    <property type="taxonomic scope" value="Eukaryota"/>
</dbReference>
<dbReference type="HOGENOM" id="CLU_014815_3_0_1"/>
<dbReference type="InParanoid" id="Q2H0I3"/>
<dbReference type="OMA" id="FWANVKH"/>
<dbReference type="OrthoDB" id="3249161at2759"/>
<dbReference type="Proteomes" id="UP000001056">
    <property type="component" value="Unassembled WGS sequence"/>
</dbReference>
<dbReference type="GO" id="GO:0099115">
    <property type="term" value="C:chromosome, subtelomeric region"/>
    <property type="evidence" value="ECO:0007669"/>
    <property type="project" value="EnsemblFungi"/>
</dbReference>
<dbReference type="GO" id="GO:0140445">
    <property type="term" value="C:chromosome, telomeric repeat region"/>
    <property type="evidence" value="ECO:0007669"/>
    <property type="project" value="EnsemblFungi"/>
</dbReference>
<dbReference type="GO" id="GO:0043564">
    <property type="term" value="C:Ku70:Ku80 complex"/>
    <property type="evidence" value="ECO:0007669"/>
    <property type="project" value="InterPro"/>
</dbReference>
<dbReference type="GO" id="GO:0005721">
    <property type="term" value="C:pericentric heterochromatin"/>
    <property type="evidence" value="ECO:0007669"/>
    <property type="project" value="EnsemblFungi"/>
</dbReference>
<dbReference type="GO" id="GO:0035861">
    <property type="term" value="C:site of double-strand break"/>
    <property type="evidence" value="ECO:0007669"/>
    <property type="project" value="EnsemblFungi"/>
</dbReference>
<dbReference type="GO" id="GO:0005524">
    <property type="term" value="F:ATP binding"/>
    <property type="evidence" value="ECO:0007669"/>
    <property type="project" value="UniProtKB-KW"/>
</dbReference>
<dbReference type="GO" id="GO:0016887">
    <property type="term" value="F:ATP hydrolysis activity"/>
    <property type="evidence" value="ECO:0007669"/>
    <property type="project" value="RHEA"/>
</dbReference>
<dbReference type="GO" id="GO:0003684">
    <property type="term" value="F:damaged DNA binding"/>
    <property type="evidence" value="ECO:0007669"/>
    <property type="project" value="InterPro"/>
</dbReference>
<dbReference type="GO" id="GO:0003678">
    <property type="term" value="F:DNA helicase activity"/>
    <property type="evidence" value="ECO:0007669"/>
    <property type="project" value="InterPro"/>
</dbReference>
<dbReference type="GO" id="GO:0003690">
    <property type="term" value="F:double-stranded DNA binding"/>
    <property type="evidence" value="ECO:0007669"/>
    <property type="project" value="TreeGrafter"/>
</dbReference>
<dbReference type="GO" id="GO:0042162">
    <property type="term" value="F:telomeric DNA binding"/>
    <property type="evidence" value="ECO:0007669"/>
    <property type="project" value="EnsemblFungi"/>
</dbReference>
<dbReference type="GO" id="GO:0006310">
    <property type="term" value="P:DNA recombination"/>
    <property type="evidence" value="ECO:0007669"/>
    <property type="project" value="UniProtKB-KW"/>
</dbReference>
<dbReference type="GO" id="GO:0006303">
    <property type="term" value="P:double-strand break repair via nonhomologous end joining"/>
    <property type="evidence" value="ECO:0007669"/>
    <property type="project" value="EnsemblFungi"/>
</dbReference>
<dbReference type="GO" id="GO:0120290">
    <property type="term" value="P:stalled replication fork localization to nuclear periphery"/>
    <property type="evidence" value="ECO:0007669"/>
    <property type="project" value="EnsemblFungi"/>
</dbReference>
<dbReference type="GO" id="GO:0000723">
    <property type="term" value="P:telomere maintenance"/>
    <property type="evidence" value="ECO:0007669"/>
    <property type="project" value="EnsemblFungi"/>
</dbReference>
<dbReference type="CDD" id="cd00788">
    <property type="entry name" value="KU70"/>
    <property type="match status" value="1"/>
</dbReference>
<dbReference type="CDD" id="cd01458">
    <property type="entry name" value="vWA_ku"/>
    <property type="match status" value="1"/>
</dbReference>
<dbReference type="FunFam" id="1.10.1600.10:FF:000004">
    <property type="entry name" value="ATP-dependent DNA helicase II subunit 1"/>
    <property type="match status" value="1"/>
</dbReference>
<dbReference type="FunFam" id="3.40.50.410:FF:000071">
    <property type="entry name" value="ATP-dependent DNA helicase II subunit 1"/>
    <property type="match status" value="1"/>
</dbReference>
<dbReference type="Gene3D" id="1.10.1600.10">
    <property type="match status" value="1"/>
</dbReference>
<dbReference type="Gene3D" id="2.40.290.10">
    <property type="match status" value="1"/>
</dbReference>
<dbReference type="Gene3D" id="1.10.720.30">
    <property type="entry name" value="SAP domain"/>
    <property type="match status" value="1"/>
</dbReference>
<dbReference type="Gene3D" id="3.40.50.410">
    <property type="entry name" value="von Willebrand factor, type A domain"/>
    <property type="match status" value="1"/>
</dbReference>
<dbReference type="InterPro" id="IPR006165">
    <property type="entry name" value="Ku70"/>
</dbReference>
<dbReference type="InterPro" id="IPR006164">
    <property type="entry name" value="Ku70/Ku80_beta-barrel_dom"/>
</dbReference>
<dbReference type="InterPro" id="IPR047087">
    <property type="entry name" value="KU70_core_dom"/>
</dbReference>
<dbReference type="InterPro" id="IPR005160">
    <property type="entry name" value="Ku_C"/>
</dbReference>
<dbReference type="InterPro" id="IPR005161">
    <property type="entry name" value="Ku_N"/>
</dbReference>
<dbReference type="InterPro" id="IPR003034">
    <property type="entry name" value="SAP_dom"/>
</dbReference>
<dbReference type="InterPro" id="IPR036361">
    <property type="entry name" value="SAP_dom_sf"/>
</dbReference>
<dbReference type="InterPro" id="IPR016194">
    <property type="entry name" value="SPOC-like_C_dom_sf"/>
</dbReference>
<dbReference type="InterPro" id="IPR036465">
    <property type="entry name" value="vWFA_dom_sf"/>
</dbReference>
<dbReference type="PANTHER" id="PTHR12604">
    <property type="entry name" value="KU AUTOANTIGEN DNA HELICASE"/>
    <property type="match status" value="1"/>
</dbReference>
<dbReference type="PANTHER" id="PTHR12604:SF2">
    <property type="entry name" value="X-RAY REPAIR CROSS-COMPLEMENTING PROTEIN 6"/>
    <property type="match status" value="1"/>
</dbReference>
<dbReference type="Pfam" id="PF02735">
    <property type="entry name" value="Ku"/>
    <property type="match status" value="1"/>
</dbReference>
<dbReference type="Pfam" id="PF03730">
    <property type="entry name" value="Ku_C"/>
    <property type="match status" value="1"/>
</dbReference>
<dbReference type="Pfam" id="PF03731">
    <property type="entry name" value="Ku_N"/>
    <property type="match status" value="1"/>
</dbReference>
<dbReference type="Pfam" id="PF02037">
    <property type="entry name" value="SAP"/>
    <property type="match status" value="1"/>
</dbReference>
<dbReference type="PIRSF" id="PIRSF003033">
    <property type="entry name" value="Ku70"/>
    <property type="match status" value="1"/>
</dbReference>
<dbReference type="SMART" id="SM00559">
    <property type="entry name" value="Ku78"/>
    <property type="match status" value="1"/>
</dbReference>
<dbReference type="SMART" id="SM00513">
    <property type="entry name" value="SAP"/>
    <property type="match status" value="1"/>
</dbReference>
<dbReference type="SUPFAM" id="SSF68906">
    <property type="entry name" value="SAP domain"/>
    <property type="match status" value="1"/>
</dbReference>
<dbReference type="SUPFAM" id="SSF100939">
    <property type="entry name" value="SPOC domain-like"/>
    <property type="match status" value="1"/>
</dbReference>
<dbReference type="SUPFAM" id="SSF53300">
    <property type="entry name" value="vWA-like"/>
    <property type="match status" value="1"/>
</dbReference>
<dbReference type="PROSITE" id="PS50800">
    <property type="entry name" value="SAP"/>
    <property type="match status" value="1"/>
</dbReference>
<sequence length="622" mass="68878">MAWGGDDDRRPDADEGEEELDETDYKTQKDAVLFAIDVSSSMLQQPPATDKKRADKDSAIAAALKCAYQFMQQRIIAQPKDMMGILLFGTEKSRFRDEVGGRSSGYPHCYLFTDLDVPAAEDVKSLKALVEEGEDPDEVLVPAKEPASMANVLFCANQVFTTNAANFGSRRLFIITDNDAPHGKDKAAKSAAAVRAKDLYDLGVVIELFPVSHEGKAFDVSKFYDDIIYRDPATEAISDEVKTSKSGDGLSLLNSLISNINSKQTPKRAYFSNLHFELAPNVTISVKGYMPLHRQQPARTCYVWLGGEQAQLAQSETIKVDSATRTVDKSEVKKAYKFGGEYIHFKPEEAASLKNLGGKVLRVIGFKPRSLLPTWASVKKSIFIFPSEEHFVGSTPRENANPIMVAIIPSRAMDDETSETPYLPAGLWLYPLPFADDVRNVDLAAPPRPADELTDKMREIVQNLQLPKAMYNPLKYPNPSLQWHYKVLQAMALDEDVPEALDDATIPKYRQIDKRVGGYLAEWKEALTEKAGGLMKSRAMKREAEDEDVSRPLAKRTKPAAPKEAAGGHMSNAQLKAALEQDTLKKMTVAELKDVLASKGVSAVGKKAELVDKLEQWIEENV</sequence>
<accession>Q2H0I3</accession>
<protein>
    <recommendedName>
        <fullName>ATP-dependent DNA helicase II subunit 1</fullName>
        <ecNumber>3.6.4.12</ecNumber>
    </recommendedName>
    <alternativeName>
        <fullName>ATP-dependent DNA helicase II subunit Ku70</fullName>
    </alternativeName>
</protein>
<keyword id="KW-0067">ATP-binding</keyword>
<keyword id="KW-0158">Chromosome</keyword>
<keyword id="KW-0227">DNA damage</keyword>
<keyword id="KW-0233">DNA recombination</keyword>
<keyword id="KW-0234">DNA repair</keyword>
<keyword id="KW-0238">DNA-binding</keyword>
<keyword id="KW-0347">Helicase</keyword>
<keyword id="KW-0378">Hydrolase</keyword>
<keyword id="KW-0547">Nucleotide-binding</keyword>
<keyword id="KW-0539">Nucleus</keyword>
<keyword id="KW-1185">Reference proteome</keyword>
<keyword id="KW-0779">Telomere</keyword>
<evidence type="ECO:0000250" key="1"/>
<evidence type="ECO:0000255" key="2">
    <source>
        <dbReference type="PROSITE-ProRule" id="PRU00186"/>
    </source>
</evidence>
<evidence type="ECO:0000256" key="3">
    <source>
        <dbReference type="SAM" id="MobiDB-lite"/>
    </source>
</evidence>
<evidence type="ECO:0000305" key="4"/>
<comment type="function">
    <text evidence="1">Single-stranded DNA-dependent ATP-dependent helicase. Involved in non-homologous end joining (NHEJ) DNA double strand break repair. DNA-binding is sequence-independent but has a high affinity to nicks in double-stranded DNA and to the ends of duplex DNA. Binds to naturally occurring chromosomal ends, and therefore provides chromosomal end protection. Required also for telomere recombination to repair telomeric ends in the absence of telomerase. KU70, of the KU70/KU80 heterodimer, binds to the stem loop of TLC1, the RNA component of telomerase. Involved in telomere maintenance. Interacts with telomeric repeats and subtelomeric sequences thereby controlling telomere length and protecting against subtelomeric rearrangement. Maintains telomeric chromatin, which is involved in silencing the expression of genes located at the telomere. Required for mating-type switching (By similarity).</text>
</comment>
<comment type="catalytic activity">
    <reaction>
        <text>ATP + H2O = ADP + phosphate + H(+)</text>
        <dbReference type="Rhea" id="RHEA:13065"/>
        <dbReference type="ChEBI" id="CHEBI:15377"/>
        <dbReference type="ChEBI" id="CHEBI:15378"/>
        <dbReference type="ChEBI" id="CHEBI:30616"/>
        <dbReference type="ChEBI" id="CHEBI:43474"/>
        <dbReference type="ChEBI" id="CHEBI:456216"/>
        <dbReference type="EC" id="3.6.4.12"/>
    </reaction>
</comment>
<comment type="subunit">
    <text evidence="1">Heterodimer of Ku70 and Ku80.</text>
</comment>
<comment type="subcellular location">
    <subcellularLocation>
        <location evidence="1">Nucleus</location>
    </subcellularLocation>
    <subcellularLocation>
        <location evidence="1">Chromosome</location>
        <location evidence="1">Telomere</location>
    </subcellularLocation>
</comment>
<comment type="similarity">
    <text evidence="4">Belongs to the ku70 family.</text>
</comment>
<proteinExistence type="inferred from homology"/>
<gene>
    <name type="primary">KU70</name>
    <name type="ORF">CHGG_04713</name>
</gene>
<organism>
    <name type="scientific">Chaetomium globosum (strain ATCC 6205 / CBS 148.51 / DSM 1962 / NBRC 6347 / NRRL 1970)</name>
    <name type="common">Soil fungus</name>
    <dbReference type="NCBI Taxonomy" id="306901"/>
    <lineage>
        <taxon>Eukaryota</taxon>
        <taxon>Fungi</taxon>
        <taxon>Dikarya</taxon>
        <taxon>Ascomycota</taxon>
        <taxon>Pezizomycotina</taxon>
        <taxon>Sordariomycetes</taxon>
        <taxon>Sordariomycetidae</taxon>
        <taxon>Sordariales</taxon>
        <taxon>Chaetomiaceae</taxon>
        <taxon>Chaetomium</taxon>
    </lineage>
</organism>
<feature type="chain" id="PRO_0000278340" description="ATP-dependent DNA helicase II subunit 1">
    <location>
        <begin position="1"/>
        <end position="622"/>
    </location>
</feature>
<feature type="domain" description="Ku">
    <location>
        <begin position="276"/>
        <end position="463"/>
    </location>
</feature>
<feature type="domain" description="SAP" evidence="2">
    <location>
        <begin position="584"/>
        <end position="618"/>
    </location>
</feature>
<feature type="region of interest" description="Disordered" evidence="3">
    <location>
        <begin position="1"/>
        <end position="26"/>
    </location>
</feature>
<feature type="region of interest" description="Disordered" evidence="3">
    <location>
        <begin position="537"/>
        <end position="572"/>
    </location>
</feature>
<feature type="compositionally biased region" description="Basic and acidic residues" evidence="3">
    <location>
        <begin position="1"/>
        <end position="13"/>
    </location>
</feature>
<reference key="1">
    <citation type="journal article" date="2015" name="Genome Announc.">
        <title>Draft genome sequence of the cellulolytic fungus Chaetomium globosum.</title>
        <authorList>
            <person name="Cuomo C.A."/>
            <person name="Untereiner W.A."/>
            <person name="Ma L.-J."/>
            <person name="Grabherr M."/>
            <person name="Birren B.W."/>
        </authorList>
    </citation>
    <scope>NUCLEOTIDE SEQUENCE [LARGE SCALE GENOMIC DNA]</scope>
    <source>
        <strain>ATCC 6205 / CBS 148.51 / DSM 1962 / NBRC 6347 / NRRL 1970</strain>
    </source>
</reference>
<name>KU70_CHAGB</name>